<feature type="chain" id="PRO_0000086156" description="Serine/threonine-protein kinase PSK2">
    <location>
        <begin position="1"/>
        <end position="1101"/>
    </location>
</feature>
<feature type="domain" description="Protein kinase" evidence="1">
    <location>
        <begin position="841"/>
        <end position="1099"/>
    </location>
</feature>
<feature type="active site" description="Proton acceptor" evidence="1 2">
    <location>
        <position position="975"/>
    </location>
</feature>
<feature type="binding site" evidence="1">
    <location>
        <begin position="847"/>
        <end position="855"/>
    </location>
    <ligand>
        <name>ATP</name>
        <dbReference type="ChEBI" id="CHEBI:30616"/>
    </ligand>
</feature>
<feature type="binding site" evidence="1">
    <location>
        <position position="870"/>
    </location>
    <ligand>
        <name>ATP</name>
        <dbReference type="ChEBI" id="CHEBI:30616"/>
    </ligand>
</feature>
<feature type="modified residue" description="Phosphothreonine" evidence="7 8">
    <location>
        <position position="118"/>
    </location>
</feature>
<protein>
    <recommendedName>
        <fullName>Serine/threonine-protein kinase PSK2</fullName>
        <ecNumber>2.7.11.1</ecNumber>
    </recommendedName>
    <alternativeName>
        <fullName>PAS kinase 2</fullName>
    </alternativeName>
</protein>
<dbReference type="EC" id="2.7.11.1"/>
<dbReference type="EMBL" id="Z74788">
    <property type="protein sequence ID" value="CAA99051.1"/>
    <property type="molecule type" value="Genomic_DNA"/>
</dbReference>
<dbReference type="EMBL" id="Z74786">
    <property type="protein sequence ID" value="CAA99047.1"/>
    <property type="molecule type" value="Genomic_DNA"/>
</dbReference>
<dbReference type="EMBL" id="BK006948">
    <property type="protein sequence ID" value="DAA10737.1"/>
    <property type="molecule type" value="Genomic_DNA"/>
</dbReference>
<dbReference type="PIR" id="S66730">
    <property type="entry name" value="S66730"/>
</dbReference>
<dbReference type="RefSeq" id="NP_014597.1">
    <property type="nucleotide sequence ID" value="NM_001183299.1"/>
</dbReference>
<dbReference type="SMR" id="Q08217"/>
<dbReference type="BioGRID" id="34357">
    <property type="interactions" value="190"/>
</dbReference>
<dbReference type="DIP" id="DIP-6430N"/>
<dbReference type="FunCoup" id="Q08217">
    <property type="interactions" value="286"/>
</dbReference>
<dbReference type="IntAct" id="Q08217">
    <property type="interactions" value="9"/>
</dbReference>
<dbReference type="MINT" id="Q08217"/>
<dbReference type="STRING" id="4932.YOL045W"/>
<dbReference type="iPTMnet" id="Q08217"/>
<dbReference type="PaxDb" id="4932-YOL045W"/>
<dbReference type="PeptideAtlas" id="Q08217"/>
<dbReference type="TopDownProteomics" id="Q08217"/>
<dbReference type="EnsemblFungi" id="YOL045W_mRNA">
    <property type="protein sequence ID" value="YOL045W"/>
    <property type="gene ID" value="YOL045W"/>
</dbReference>
<dbReference type="GeneID" id="854111"/>
<dbReference type="KEGG" id="sce:YOL045W"/>
<dbReference type="AGR" id="SGD:S000005405"/>
<dbReference type="SGD" id="S000005405">
    <property type="gene designation" value="PSK2"/>
</dbReference>
<dbReference type="VEuPathDB" id="FungiDB:YOL045W"/>
<dbReference type="eggNOG" id="KOG1152">
    <property type="taxonomic scope" value="Eukaryota"/>
</dbReference>
<dbReference type="GeneTree" id="ENSGT00940000159035"/>
<dbReference type="HOGENOM" id="CLU_004134_1_0_1"/>
<dbReference type="InParanoid" id="Q08217"/>
<dbReference type="OMA" id="KFANEIH"/>
<dbReference type="OrthoDB" id="10252171at2759"/>
<dbReference type="BioCyc" id="YEAST:G3O-33459-MONOMER"/>
<dbReference type="BioGRID-ORCS" id="854111">
    <property type="hits" value="0 hits in 13 CRISPR screens"/>
</dbReference>
<dbReference type="PRO" id="PR:Q08217"/>
<dbReference type="Proteomes" id="UP000002311">
    <property type="component" value="Chromosome XV"/>
</dbReference>
<dbReference type="RNAct" id="Q08217">
    <property type="molecule type" value="protein"/>
</dbReference>
<dbReference type="GO" id="GO:0005737">
    <property type="term" value="C:cytoplasm"/>
    <property type="evidence" value="ECO:0007005"/>
    <property type="project" value="SGD"/>
</dbReference>
<dbReference type="GO" id="GO:0005829">
    <property type="term" value="C:cytosol"/>
    <property type="evidence" value="ECO:0000318"/>
    <property type="project" value="GO_Central"/>
</dbReference>
<dbReference type="GO" id="GO:0005739">
    <property type="term" value="C:mitochondrion"/>
    <property type="evidence" value="ECO:0007005"/>
    <property type="project" value="SGD"/>
</dbReference>
<dbReference type="GO" id="GO:0005634">
    <property type="term" value="C:nucleus"/>
    <property type="evidence" value="ECO:0000318"/>
    <property type="project" value="GO_Central"/>
</dbReference>
<dbReference type="GO" id="GO:0005524">
    <property type="term" value="F:ATP binding"/>
    <property type="evidence" value="ECO:0007669"/>
    <property type="project" value="UniProtKB-KW"/>
</dbReference>
<dbReference type="GO" id="GO:0106310">
    <property type="term" value="F:protein serine kinase activity"/>
    <property type="evidence" value="ECO:0007669"/>
    <property type="project" value="RHEA"/>
</dbReference>
<dbReference type="GO" id="GO:0004674">
    <property type="term" value="F:protein serine/threonine kinase activity"/>
    <property type="evidence" value="ECO:0000314"/>
    <property type="project" value="SGD"/>
</dbReference>
<dbReference type="GO" id="GO:0035556">
    <property type="term" value="P:intracellular signal transduction"/>
    <property type="evidence" value="ECO:0000318"/>
    <property type="project" value="GO_Central"/>
</dbReference>
<dbReference type="GO" id="GO:2000766">
    <property type="term" value="P:negative regulation of cytoplasmic translation"/>
    <property type="evidence" value="ECO:0000315"/>
    <property type="project" value="SGD"/>
</dbReference>
<dbReference type="GO" id="GO:0045719">
    <property type="term" value="P:negative regulation of glycogen biosynthetic process"/>
    <property type="evidence" value="ECO:0000315"/>
    <property type="project" value="SGD"/>
</dbReference>
<dbReference type="GO" id="GO:0060917">
    <property type="term" value="P:regulation of (1-&gt;6)-beta-D-glucan biosynthetic process"/>
    <property type="evidence" value="ECO:0000316"/>
    <property type="project" value="SGD"/>
</dbReference>
<dbReference type="CDD" id="cd00130">
    <property type="entry name" value="PAS"/>
    <property type="match status" value="1"/>
</dbReference>
<dbReference type="CDD" id="cd14004">
    <property type="entry name" value="STKc_PASK"/>
    <property type="match status" value="1"/>
</dbReference>
<dbReference type="FunFam" id="1.10.510.10:FF:000320">
    <property type="entry name" value="Serine/threonine protein kinase"/>
    <property type="match status" value="1"/>
</dbReference>
<dbReference type="FunFam" id="3.30.200.20:FF:000314">
    <property type="entry name" value="Serine/threonine protein kinase"/>
    <property type="match status" value="1"/>
</dbReference>
<dbReference type="Gene3D" id="3.30.200.20">
    <property type="entry name" value="Phosphorylase Kinase, domain 1"/>
    <property type="match status" value="1"/>
</dbReference>
<dbReference type="Gene3D" id="1.10.510.10">
    <property type="entry name" value="Transferase(Phosphotransferase) domain 1"/>
    <property type="match status" value="1"/>
</dbReference>
<dbReference type="InterPro" id="IPR011009">
    <property type="entry name" value="Kinase-like_dom_sf"/>
</dbReference>
<dbReference type="InterPro" id="IPR000014">
    <property type="entry name" value="PAS"/>
</dbReference>
<dbReference type="InterPro" id="IPR000719">
    <property type="entry name" value="Prot_kinase_dom"/>
</dbReference>
<dbReference type="InterPro" id="IPR008271">
    <property type="entry name" value="Ser/Thr_kinase_AS"/>
</dbReference>
<dbReference type="PANTHER" id="PTHR24346">
    <property type="entry name" value="MAP/MICROTUBULE AFFINITY-REGULATING KINASE"/>
    <property type="match status" value="1"/>
</dbReference>
<dbReference type="PANTHER" id="PTHR24346:SF51">
    <property type="entry name" value="PAS DOMAIN-CONTAINING SERINE_THREONINE-PROTEIN KINASE"/>
    <property type="match status" value="1"/>
</dbReference>
<dbReference type="Pfam" id="PF00069">
    <property type="entry name" value="Pkinase"/>
    <property type="match status" value="1"/>
</dbReference>
<dbReference type="SMART" id="SM00091">
    <property type="entry name" value="PAS"/>
    <property type="match status" value="1"/>
</dbReference>
<dbReference type="SMART" id="SM00220">
    <property type="entry name" value="S_TKc"/>
    <property type="match status" value="1"/>
</dbReference>
<dbReference type="SUPFAM" id="SSF56112">
    <property type="entry name" value="Protein kinase-like (PK-like)"/>
    <property type="match status" value="1"/>
</dbReference>
<dbReference type="PROSITE" id="PS50011">
    <property type="entry name" value="PROTEIN_KINASE_DOM"/>
    <property type="match status" value="1"/>
</dbReference>
<dbReference type="PROSITE" id="PS00108">
    <property type="entry name" value="PROTEIN_KINASE_ST"/>
    <property type="match status" value="1"/>
</dbReference>
<organism>
    <name type="scientific">Saccharomyces cerevisiae (strain ATCC 204508 / S288c)</name>
    <name type="common">Baker's yeast</name>
    <dbReference type="NCBI Taxonomy" id="559292"/>
    <lineage>
        <taxon>Eukaryota</taxon>
        <taxon>Fungi</taxon>
        <taxon>Dikarya</taxon>
        <taxon>Ascomycota</taxon>
        <taxon>Saccharomycotina</taxon>
        <taxon>Saccharomycetes</taxon>
        <taxon>Saccharomycetales</taxon>
        <taxon>Saccharomycetaceae</taxon>
        <taxon>Saccharomyces</taxon>
    </lineage>
</organism>
<evidence type="ECO:0000255" key="1">
    <source>
        <dbReference type="PROSITE-ProRule" id="PRU00159"/>
    </source>
</evidence>
<evidence type="ECO:0000255" key="2">
    <source>
        <dbReference type="PROSITE-ProRule" id="PRU10027"/>
    </source>
</evidence>
<evidence type="ECO:0000269" key="3">
    <source>
    </source>
</evidence>
<evidence type="ECO:0000269" key="4">
    <source>
    </source>
</evidence>
<evidence type="ECO:0000269" key="5">
    <source>
    </source>
</evidence>
<evidence type="ECO:0000269" key="6">
    <source>
    </source>
</evidence>
<evidence type="ECO:0007744" key="7">
    <source>
    </source>
</evidence>
<evidence type="ECO:0007744" key="8">
    <source>
    </source>
</evidence>
<keyword id="KW-0067">ATP-binding</keyword>
<keyword id="KW-0963">Cytoplasm</keyword>
<keyword id="KW-0418">Kinase</keyword>
<keyword id="KW-0547">Nucleotide-binding</keyword>
<keyword id="KW-0597">Phosphoprotein</keyword>
<keyword id="KW-1185">Reference proteome</keyword>
<keyword id="KW-0723">Serine/threonine-protein kinase</keyword>
<keyword id="KW-0808">Transferase</keyword>
<keyword id="KW-0810">Translation regulation</keyword>
<sequence>MTYPVSAAAPADISYSKNTPLVGLSKPPCLYQHASSSVDSFSSTFSDDDRSDLVAVPNESPHAFSYNPISPNSLGVRLTILRRSLEIMVNSPDILHELKKKAPVIAYPPSLRHTRNLTETATLSASRDPLNGSLISPLVSNMPSPASRPVIQRATSLMVLPDNDTASKLNPAKSELENLLFLLNLALENNSFERASDLHMLSLLNIKKINFDSDIQKSETLKKVLLDSLAEPFFENYKKFPHKDLGSKSQYNEYEEKHDDIVSLADIKPQQDYSRILHPFTSAKNSGPEAIFTCSQQYPWNFKAANDLACLTFGISKNVIKALTLLDLIHTDSRNFVLEKIMNAEDDNQEIVFTGETIPIVQPNSTSNNNVPNLIWASLWAKRKNGLLVCVFEKTPCDYIDVMLNLRDFSVDSIIDTTHFLENFDKKKQQESTSPMTEKKTVKFANEIHDIGSVSHSLSKLIDDVRFGKVFSADDDLLPLSIRVANHVNEERYFTLNCLSENIPCAVTTSVLENEIKLKIHSLPYQAGLFIVDSHTLSLLSFNKSVAKNMFGLRLHELAGSSVTKLVPSLADMISYINKTYPMLNITLPENKGLVLTEHFFRKIEAEMHHDKDSFYTSIGLDGCHKDGNLIKVDVQLRVLNTNAVLLWITHSRDVVIENYTTVPSQLPMLKENEIDVVGSRGSSSASSKKSSEKIPVNTLKAMADLSISSAETISNSDDEVDLNQVNEKLRETSCGKVRGIESNDNNNYDDDMTMVDDPELKHKIELTKMYTQDKSKFVKDDNFKVDEKFIMRIIEPINGEEIKKETNELDKRNSTLKATYLTTPEANIGSQKRIKKFSDFTILQVMGEGAYGKVNLCIHNREHYIVVIKMIFKERILVDTWVRDRKLGTIPSEIQIMATLNKNSQENILKLLDFFEDDDYYYIETPVHGETGSIDLFDVIEFKKDMVEHEAKLVFKQVVASIKHLHDQGIVHRDIKDENVIVDSHGFVKLIDFGSAAYIKSGPFDVFVGTMDYAAPEVLGGSSYKGKPQDIWALGVLLYTIIYKENPYYNIDEILEGELRFDKSEHVSEECISLIKRILTREVDKRPTIDEIYEDKWLKI</sequence>
<accession>Q08217</accession>
<accession>D6W221</accession>
<proteinExistence type="evidence at protein level"/>
<reference key="1">
    <citation type="journal article" date="1997" name="Nature">
        <title>The nucleotide sequence of Saccharomyces cerevisiae chromosome XV.</title>
        <authorList>
            <person name="Dujon B."/>
            <person name="Albermann K."/>
            <person name="Aldea M."/>
            <person name="Alexandraki D."/>
            <person name="Ansorge W."/>
            <person name="Arino J."/>
            <person name="Benes V."/>
            <person name="Bohn C."/>
            <person name="Bolotin-Fukuhara M."/>
            <person name="Bordonne R."/>
            <person name="Boyer J."/>
            <person name="Camasses A."/>
            <person name="Casamayor A."/>
            <person name="Casas C."/>
            <person name="Cheret G."/>
            <person name="Cziepluch C."/>
            <person name="Daignan-Fornier B."/>
            <person name="Dang V.-D."/>
            <person name="de Haan M."/>
            <person name="Delius H."/>
            <person name="Durand P."/>
            <person name="Fairhead C."/>
            <person name="Feldmann H."/>
            <person name="Gaillon L."/>
            <person name="Galisson F."/>
            <person name="Gamo F.-J."/>
            <person name="Gancedo C."/>
            <person name="Goffeau A."/>
            <person name="Goulding S.E."/>
            <person name="Grivell L.A."/>
            <person name="Habbig B."/>
            <person name="Hand N.J."/>
            <person name="Hani J."/>
            <person name="Hattenhorst U."/>
            <person name="Hebling U."/>
            <person name="Hernando Y."/>
            <person name="Herrero E."/>
            <person name="Heumann K."/>
            <person name="Hiesel R."/>
            <person name="Hilger F."/>
            <person name="Hofmann B."/>
            <person name="Hollenberg C.P."/>
            <person name="Hughes B."/>
            <person name="Jauniaux J.-C."/>
            <person name="Kalogeropoulos A."/>
            <person name="Katsoulou C."/>
            <person name="Kordes E."/>
            <person name="Lafuente M.J."/>
            <person name="Landt O."/>
            <person name="Louis E.J."/>
            <person name="Maarse A.C."/>
            <person name="Madania A."/>
            <person name="Mannhaupt G."/>
            <person name="Marck C."/>
            <person name="Martin R.P."/>
            <person name="Mewes H.-W."/>
            <person name="Michaux G."/>
            <person name="Paces V."/>
            <person name="Parle-McDermott A.G."/>
            <person name="Pearson B.M."/>
            <person name="Perrin A."/>
            <person name="Pettersson B."/>
            <person name="Poch O."/>
            <person name="Pohl T.M."/>
            <person name="Poirey R."/>
            <person name="Portetelle D."/>
            <person name="Pujol A."/>
            <person name="Purnelle B."/>
            <person name="Ramezani Rad M."/>
            <person name="Rechmann S."/>
            <person name="Schwager C."/>
            <person name="Schweizer M."/>
            <person name="Sor F."/>
            <person name="Sterky F."/>
            <person name="Tarassov I.A."/>
            <person name="Teodoru C."/>
            <person name="Tettelin H."/>
            <person name="Thierry A."/>
            <person name="Tobiasch E."/>
            <person name="Tzermia M."/>
            <person name="Uhlen M."/>
            <person name="Unseld M."/>
            <person name="Valens M."/>
            <person name="Vandenbol M."/>
            <person name="Vetter I."/>
            <person name="Vlcek C."/>
            <person name="Voet M."/>
            <person name="Volckaert G."/>
            <person name="Voss H."/>
            <person name="Wambutt R."/>
            <person name="Wedler H."/>
            <person name="Wiemann S."/>
            <person name="Winsor B."/>
            <person name="Wolfe K.H."/>
            <person name="Zollner A."/>
            <person name="Zumstein E."/>
            <person name="Kleine K."/>
        </authorList>
    </citation>
    <scope>NUCLEOTIDE SEQUENCE [LARGE SCALE GENOMIC DNA]</scope>
    <source>
        <strain>ATCC 204508 / S288c</strain>
    </source>
</reference>
<reference key="2">
    <citation type="journal article" date="2014" name="G3 (Bethesda)">
        <title>The reference genome sequence of Saccharomyces cerevisiae: Then and now.</title>
        <authorList>
            <person name="Engel S.R."/>
            <person name="Dietrich F.S."/>
            <person name="Fisk D.G."/>
            <person name="Binkley G."/>
            <person name="Balakrishnan R."/>
            <person name="Costanzo M.C."/>
            <person name="Dwight S.S."/>
            <person name="Hitz B.C."/>
            <person name="Karra K."/>
            <person name="Nash R.S."/>
            <person name="Weng S."/>
            <person name="Wong E.D."/>
            <person name="Lloyd P."/>
            <person name="Skrzypek M.S."/>
            <person name="Miyasato S.R."/>
            <person name="Simison M."/>
            <person name="Cherry J.M."/>
        </authorList>
    </citation>
    <scope>GENOME REANNOTATION</scope>
    <source>
        <strain>ATCC 204508 / S288c</strain>
    </source>
</reference>
<reference key="3">
    <citation type="journal article" date="2001" name="Proc. Natl. Acad. Sci. U.S.A.">
        <title>PAS kinase: an evolutionarily conserved PAS domain-regulated serine/threonine kinase.</title>
        <authorList>
            <person name="Rutter J."/>
            <person name="Michnoff C.H."/>
            <person name="Harper S.M."/>
            <person name="Gardner K.H."/>
            <person name="McKnight S.L."/>
        </authorList>
    </citation>
    <scope>DOMAIN</scope>
</reference>
<reference key="4">
    <citation type="journal article" date="2002" name="Cell">
        <title>Coordinate regulation of sugar flux and translation by PAS kinase.</title>
        <authorList>
            <person name="Rutter J."/>
            <person name="Probst B.L."/>
            <person name="McKnight S.L."/>
        </authorList>
    </citation>
    <scope>FUNCTION</scope>
</reference>
<reference key="5">
    <citation type="journal article" date="2003" name="Nature">
        <title>Global analysis of protein localization in budding yeast.</title>
        <authorList>
            <person name="Huh W.-K."/>
            <person name="Falvo J.V."/>
            <person name="Gerke L.C."/>
            <person name="Carroll A.S."/>
            <person name="Howson R.W."/>
            <person name="Weissman J.S."/>
            <person name="O'Shea E.K."/>
        </authorList>
    </citation>
    <scope>SUBCELLULAR LOCATION [LARGE SCALE ANALYSIS]</scope>
</reference>
<reference key="6">
    <citation type="journal article" date="2003" name="Nature">
        <title>Global analysis of protein expression in yeast.</title>
        <authorList>
            <person name="Ghaemmaghami S."/>
            <person name="Huh W.-K."/>
            <person name="Bower K."/>
            <person name="Howson R.W."/>
            <person name="Belle A."/>
            <person name="Dephoure N."/>
            <person name="O'Shea E.K."/>
            <person name="Weissman J.S."/>
        </authorList>
    </citation>
    <scope>LEVEL OF PROTEIN EXPRESSION [LARGE SCALE ANALYSIS]</scope>
</reference>
<reference key="7">
    <citation type="journal article" date="2007" name="Mol. Cell">
        <title>Regulation of glucose partitioning by PAS kinase and Ugp1 phosphorylation.</title>
        <authorList>
            <person name="Smith T.L."/>
            <person name="Rutter J."/>
        </authorList>
    </citation>
    <scope>FUNCTION</scope>
</reference>
<reference key="8">
    <citation type="journal article" date="2008" name="Mol. Cell. Proteomics">
        <title>A multidimensional chromatography technology for in-depth phosphoproteome analysis.</title>
        <authorList>
            <person name="Albuquerque C.P."/>
            <person name="Smolka M.B."/>
            <person name="Payne S.H."/>
            <person name="Bafna V."/>
            <person name="Eng J."/>
            <person name="Zhou H."/>
        </authorList>
    </citation>
    <scope>PHOSPHORYLATION [LARGE SCALE ANALYSIS] AT THR-118</scope>
    <scope>IDENTIFICATION BY MASS SPECTROMETRY [LARGE SCALE ANALYSIS]</scope>
</reference>
<reference key="9">
    <citation type="journal article" date="2009" name="Science">
        <title>Global analysis of Cdk1 substrate phosphorylation sites provides insights into evolution.</title>
        <authorList>
            <person name="Holt L.J."/>
            <person name="Tuch B.B."/>
            <person name="Villen J."/>
            <person name="Johnson A.D."/>
            <person name="Gygi S.P."/>
            <person name="Morgan D.O."/>
        </authorList>
    </citation>
    <scope>PHOSPHORYLATION [LARGE SCALE ANALYSIS] AT THR-118</scope>
    <scope>IDENTIFICATION BY MASS SPECTROMETRY [LARGE SCALE ANALYSIS]</scope>
</reference>
<comment type="function">
    <text evidence="3 6">Serine/threonine-protein kinase involved in the control of sugar metabolism and translation. Phosphorylates UGP1, which is required for normal glycogen and beta-(1,6)-glucan synthesis. This phosphorylation shifts glucose partitioning toward cell wall glucan synthesis at the expense of glycogen synthesis. Also phosphorylates the glycogen synthase GSY2 and the translation factors CAF20, TIF11 and SRO9.</text>
</comment>
<comment type="catalytic activity">
    <reaction>
        <text>L-seryl-[protein] + ATP = O-phospho-L-seryl-[protein] + ADP + H(+)</text>
        <dbReference type="Rhea" id="RHEA:17989"/>
        <dbReference type="Rhea" id="RHEA-COMP:9863"/>
        <dbReference type="Rhea" id="RHEA-COMP:11604"/>
        <dbReference type="ChEBI" id="CHEBI:15378"/>
        <dbReference type="ChEBI" id="CHEBI:29999"/>
        <dbReference type="ChEBI" id="CHEBI:30616"/>
        <dbReference type="ChEBI" id="CHEBI:83421"/>
        <dbReference type="ChEBI" id="CHEBI:456216"/>
        <dbReference type="EC" id="2.7.11.1"/>
    </reaction>
</comment>
<comment type="catalytic activity">
    <reaction>
        <text>L-threonyl-[protein] + ATP = O-phospho-L-threonyl-[protein] + ADP + H(+)</text>
        <dbReference type="Rhea" id="RHEA:46608"/>
        <dbReference type="Rhea" id="RHEA-COMP:11060"/>
        <dbReference type="Rhea" id="RHEA-COMP:11605"/>
        <dbReference type="ChEBI" id="CHEBI:15378"/>
        <dbReference type="ChEBI" id="CHEBI:30013"/>
        <dbReference type="ChEBI" id="CHEBI:30616"/>
        <dbReference type="ChEBI" id="CHEBI:61977"/>
        <dbReference type="ChEBI" id="CHEBI:456216"/>
        <dbReference type="EC" id="2.7.11.1"/>
    </reaction>
</comment>
<comment type="interaction">
    <interactant intactId="EBI-9839">
        <id>Q08217</id>
    </interactant>
    <interactant intactId="EBI-19987">
        <id>P32861</id>
        <label>UGP1</label>
    </interactant>
    <organismsDiffer>false</organismsDiffer>
    <experiments>3</experiments>
</comment>
<comment type="subcellular location">
    <subcellularLocation>
        <location evidence="4">Cytoplasm</location>
    </subcellularLocation>
</comment>
<comment type="miscellaneous">
    <text evidence="5">Present with 2220 molecules/cell in log phase SD medium.</text>
</comment>
<comment type="similarity">
    <text evidence="1">Belongs to the protein kinase superfamily. Ser/Thr protein kinase family.</text>
</comment>
<name>PSK2_YEAST</name>
<gene>
    <name type="primary">PSK2</name>
    <name type="ordered locus">YOL045W</name>
</gene>